<keyword id="KW-0963">Cytoplasm</keyword>
<keyword id="KW-0441">Lipid A biosynthesis</keyword>
<keyword id="KW-0444">Lipid biosynthesis</keyword>
<keyword id="KW-0443">Lipid metabolism</keyword>
<keyword id="KW-0456">Lyase</keyword>
<keyword id="KW-1185">Reference proteome</keyword>
<organism>
    <name type="scientific">Acetivibrio thermocellus (strain ATCC 27405 / DSM 1237 / JCM 9322 / NBRC 103400 / NCIMB 10682 / NRRL B-4536 / VPI 7372)</name>
    <name type="common">Clostridium thermocellum</name>
    <dbReference type="NCBI Taxonomy" id="203119"/>
    <lineage>
        <taxon>Bacteria</taxon>
        <taxon>Bacillati</taxon>
        <taxon>Bacillota</taxon>
        <taxon>Clostridia</taxon>
        <taxon>Eubacteriales</taxon>
        <taxon>Oscillospiraceae</taxon>
        <taxon>Acetivibrio</taxon>
    </lineage>
</organism>
<gene>
    <name evidence="1" type="primary">fabZ</name>
    <name type="ordered locus">Cthe_2625</name>
</gene>
<sequence>MLTNVEIQNIIPHKYPFLLIDKILEVEPGKRAVGIKNVTINEPFFQGHFPGNPIMPGVLIVEALAQTACVAGLMLEENKGKLGVFTGIESMKFRRQVVPGDTLRLEAEFLAFKLGMGKAKVVATVDGEVAAEGQIKFAMIDTNKKA</sequence>
<dbReference type="EC" id="4.2.1.59" evidence="1"/>
<dbReference type="EMBL" id="CP000568">
    <property type="protein sequence ID" value="ABN53824.1"/>
    <property type="molecule type" value="Genomic_DNA"/>
</dbReference>
<dbReference type="RefSeq" id="WP_003512922.1">
    <property type="nucleotide sequence ID" value="NC_009012.1"/>
</dbReference>
<dbReference type="SMR" id="A3DIP5"/>
<dbReference type="STRING" id="203119.Cthe_2625"/>
<dbReference type="GeneID" id="35803752"/>
<dbReference type="KEGG" id="cth:Cthe_2625"/>
<dbReference type="eggNOG" id="COG0764">
    <property type="taxonomic scope" value="Bacteria"/>
</dbReference>
<dbReference type="HOGENOM" id="CLU_078912_3_0_9"/>
<dbReference type="OrthoDB" id="9772788at2"/>
<dbReference type="Proteomes" id="UP000002145">
    <property type="component" value="Chromosome"/>
</dbReference>
<dbReference type="GO" id="GO:0005737">
    <property type="term" value="C:cytoplasm"/>
    <property type="evidence" value="ECO:0007669"/>
    <property type="project" value="UniProtKB-SubCell"/>
</dbReference>
<dbReference type="GO" id="GO:0016020">
    <property type="term" value="C:membrane"/>
    <property type="evidence" value="ECO:0007669"/>
    <property type="project" value="GOC"/>
</dbReference>
<dbReference type="GO" id="GO:0019171">
    <property type="term" value="F:(3R)-hydroxyacyl-[acyl-carrier-protein] dehydratase activity"/>
    <property type="evidence" value="ECO:0007669"/>
    <property type="project" value="UniProtKB-EC"/>
</dbReference>
<dbReference type="GO" id="GO:0006633">
    <property type="term" value="P:fatty acid biosynthetic process"/>
    <property type="evidence" value="ECO:0007669"/>
    <property type="project" value="UniProtKB-UniRule"/>
</dbReference>
<dbReference type="GO" id="GO:0009245">
    <property type="term" value="P:lipid A biosynthetic process"/>
    <property type="evidence" value="ECO:0007669"/>
    <property type="project" value="UniProtKB-UniRule"/>
</dbReference>
<dbReference type="CDD" id="cd01288">
    <property type="entry name" value="FabZ"/>
    <property type="match status" value="1"/>
</dbReference>
<dbReference type="FunFam" id="3.10.129.10:FF:000001">
    <property type="entry name" value="3-hydroxyacyl-[acyl-carrier-protein] dehydratase FabZ"/>
    <property type="match status" value="1"/>
</dbReference>
<dbReference type="Gene3D" id="3.10.129.10">
    <property type="entry name" value="Hotdog Thioesterase"/>
    <property type="match status" value="1"/>
</dbReference>
<dbReference type="HAMAP" id="MF_00406">
    <property type="entry name" value="FabZ"/>
    <property type="match status" value="1"/>
</dbReference>
<dbReference type="InterPro" id="IPR013114">
    <property type="entry name" value="FabA_FabZ"/>
</dbReference>
<dbReference type="InterPro" id="IPR010084">
    <property type="entry name" value="FabZ"/>
</dbReference>
<dbReference type="InterPro" id="IPR029069">
    <property type="entry name" value="HotDog_dom_sf"/>
</dbReference>
<dbReference type="NCBIfam" id="TIGR01750">
    <property type="entry name" value="fabZ"/>
    <property type="match status" value="1"/>
</dbReference>
<dbReference type="NCBIfam" id="NF000582">
    <property type="entry name" value="PRK00006.1"/>
    <property type="match status" value="1"/>
</dbReference>
<dbReference type="PANTHER" id="PTHR30272">
    <property type="entry name" value="3-HYDROXYACYL-[ACYL-CARRIER-PROTEIN] DEHYDRATASE"/>
    <property type="match status" value="1"/>
</dbReference>
<dbReference type="PANTHER" id="PTHR30272:SF1">
    <property type="entry name" value="3-HYDROXYACYL-[ACYL-CARRIER-PROTEIN] DEHYDRATASE"/>
    <property type="match status" value="1"/>
</dbReference>
<dbReference type="Pfam" id="PF07977">
    <property type="entry name" value="FabA"/>
    <property type="match status" value="1"/>
</dbReference>
<dbReference type="SUPFAM" id="SSF54637">
    <property type="entry name" value="Thioesterase/thiol ester dehydrase-isomerase"/>
    <property type="match status" value="1"/>
</dbReference>
<protein>
    <recommendedName>
        <fullName evidence="1">3-hydroxyacyl-[acyl-carrier-protein] dehydratase FabZ</fullName>
        <ecNumber evidence="1">4.2.1.59</ecNumber>
    </recommendedName>
    <alternativeName>
        <fullName evidence="1">(3R)-hydroxymyristoyl-[acyl-carrier-protein] dehydratase</fullName>
        <shortName evidence="1">(3R)-hydroxymyristoyl-ACP dehydrase</shortName>
    </alternativeName>
    <alternativeName>
        <fullName evidence="1">Beta-hydroxyacyl-ACP dehydratase</fullName>
    </alternativeName>
</protein>
<feature type="chain" id="PRO_1000060828" description="3-hydroxyacyl-[acyl-carrier-protein] dehydratase FabZ">
    <location>
        <begin position="1"/>
        <end position="146"/>
    </location>
</feature>
<feature type="active site" evidence="1">
    <location>
        <position position="48"/>
    </location>
</feature>
<reference key="1">
    <citation type="submission" date="2007-02" db="EMBL/GenBank/DDBJ databases">
        <title>Complete sequence of Clostridium thermocellum ATCC 27405.</title>
        <authorList>
            <consortium name="US DOE Joint Genome Institute"/>
            <person name="Copeland A."/>
            <person name="Lucas S."/>
            <person name="Lapidus A."/>
            <person name="Barry K."/>
            <person name="Detter J.C."/>
            <person name="Glavina del Rio T."/>
            <person name="Hammon N."/>
            <person name="Israni S."/>
            <person name="Dalin E."/>
            <person name="Tice H."/>
            <person name="Pitluck S."/>
            <person name="Chertkov O."/>
            <person name="Brettin T."/>
            <person name="Bruce D."/>
            <person name="Han C."/>
            <person name="Tapia R."/>
            <person name="Gilna P."/>
            <person name="Schmutz J."/>
            <person name="Larimer F."/>
            <person name="Land M."/>
            <person name="Hauser L."/>
            <person name="Kyrpides N."/>
            <person name="Mikhailova N."/>
            <person name="Wu J.H.D."/>
            <person name="Newcomb M."/>
            <person name="Richardson P."/>
        </authorList>
    </citation>
    <scope>NUCLEOTIDE SEQUENCE [LARGE SCALE GENOMIC DNA]</scope>
    <source>
        <strain>ATCC 27405 / DSM 1237 / JCM 9322 / NBRC 103400 / NCIMB 10682 / NRRL B-4536 / VPI 7372</strain>
    </source>
</reference>
<accession>A3DIP5</accession>
<evidence type="ECO:0000255" key="1">
    <source>
        <dbReference type="HAMAP-Rule" id="MF_00406"/>
    </source>
</evidence>
<proteinExistence type="inferred from homology"/>
<name>FABZ_ACET2</name>
<comment type="function">
    <text evidence="1">Involved in unsaturated fatty acids biosynthesis. Catalyzes the dehydration of short chain beta-hydroxyacyl-ACPs and long chain saturated and unsaturated beta-hydroxyacyl-ACPs.</text>
</comment>
<comment type="catalytic activity">
    <reaction evidence="1">
        <text>a (3R)-hydroxyacyl-[ACP] = a (2E)-enoyl-[ACP] + H2O</text>
        <dbReference type="Rhea" id="RHEA:13097"/>
        <dbReference type="Rhea" id="RHEA-COMP:9925"/>
        <dbReference type="Rhea" id="RHEA-COMP:9945"/>
        <dbReference type="ChEBI" id="CHEBI:15377"/>
        <dbReference type="ChEBI" id="CHEBI:78784"/>
        <dbReference type="ChEBI" id="CHEBI:78827"/>
        <dbReference type="EC" id="4.2.1.59"/>
    </reaction>
</comment>
<comment type="subcellular location">
    <subcellularLocation>
        <location evidence="1">Cytoplasm</location>
    </subcellularLocation>
</comment>
<comment type="similarity">
    <text evidence="1">Belongs to the thioester dehydratase family. FabZ subfamily.</text>
</comment>